<accession>Q2LTK5</accession>
<reference key="1">
    <citation type="journal article" date="2007" name="Proc. Natl. Acad. Sci. U.S.A.">
        <title>The genome of Syntrophus aciditrophicus: life at the thermodynamic limit of microbial growth.</title>
        <authorList>
            <person name="McInerney M.J."/>
            <person name="Rohlin L."/>
            <person name="Mouttaki H."/>
            <person name="Kim U."/>
            <person name="Krupp R.S."/>
            <person name="Rios-Hernandez L."/>
            <person name="Sieber J."/>
            <person name="Struchtemeyer C.G."/>
            <person name="Bhattacharyya A."/>
            <person name="Campbell J.W."/>
            <person name="Gunsalus R.P."/>
        </authorList>
    </citation>
    <scope>NUCLEOTIDE SEQUENCE [LARGE SCALE GENOMIC DNA]</scope>
    <source>
        <strain>SB</strain>
    </source>
</reference>
<protein>
    <recommendedName>
        <fullName evidence="1">ATP-dependent Clp protease proteolytic subunit</fullName>
        <ecNumber evidence="1">3.4.21.92</ecNumber>
    </recommendedName>
    <alternativeName>
        <fullName evidence="1">Endopeptidase Clp</fullName>
    </alternativeName>
</protein>
<keyword id="KW-0963">Cytoplasm</keyword>
<keyword id="KW-0378">Hydrolase</keyword>
<keyword id="KW-0645">Protease</keyword>
<keyword id="KW-1185">Reference proteome</keyword>
<keyword id="KW-0720">Serine protease</keyword>
<feature type="chain" id="PRO_0000236416" description="ATP-dependent Clp protease proteolytic subunit">
    <location>
        <begin position="1"/>
        <end position="194"/>
    </location>
</feature>
<feature type="active site" description="Nucleophile" evidence="1">
    <location>
        <position position="98"/>
    </location>
</feature>
<feature type="active site" evidence="1">
    <location>
        <position position="123"/>
    </location>
</feature>
<gene>
    <name evidence="1" type="primary">clpP</name>
    <name type="ordered locus">SYNAS_15350</name>
    <name type="ORF">SYN_02785</name>
</gene>
<dbReference type="EC" id="3.4.21.92" evidence="1"/>
<dbReference type="EMBL" id="CP000252">
    <property type="protein sequence ID" value="ABC77414.1"/>
    <property type="molecule type" value="Genomic_DNA"/>
</dbReference>
<dbReference type="RefSeq" id="WP_011417436.1">
    <property type="nucleotide sequence ID" value="NC_007759.1"/>
</dbReference>
<dbReference type="SMR" id="Q2LTK5"/>
<dbReference type="FunCoup" id="Q2LTK5">
    <property type="interactions" value="441"/>
</dbReference>
<dbReference type="STRING" id="56780.SYN_02785"/>
<dbReference type="MEROPS" id="S14.001"/>
<dbReference type="KEGG" id="sat:SYN_02785"/>
<dbReference type="eggNOG" id="COG0740">
    <property type="taxonomic scope" value="Bacteria"/>
</dbReference>
<dbReference type="HOGENOM" id="CLU_058707_3_2_7"/>
<dbReference type="InParanoid" id="Q2LTK5"/>
<dbReference type="OrthoDB" id="9802800at2"/>
<dbReference type="Proteomes" id="UP000001933">
    <property type="component" value="Chromosome"/>
</dbReference>
<dbReference type="GO" id="GO:0005737">
    <property type="term" value="C:cytoplasm"/>
    <property type="evidence" value="ECO:0007669"/>
    <property type="project" value="UniProtKB-SubCell"/>
</dbReference>
<dbReference type="GO" id="GO:0009368">
    <property type="term" value="C:endopeptidase Clp complex"/>
    <property type="evidence" value="ECO:0007669"/>
    <property type="project" value="TreeGrafter"/>
</dbReference>
<dbReference type="GO" id="GO:0004176">
    <property type="term" value="F:ATP-dependent peptidase activity"/>
    <property type="evidence" value="ECO:0007669"/>
    <property type="project" value="InterPro"/>
</dbReference>
<dbReference type="GO" id="GO:0051117">
    <property type="term" value="F:ATPase binding"/>
    <property type="evidence" value="ECO:0007669"/>
    <property type="project" value="TreeGrafter"/>
</dbReference>
<dbReference type="GO" id="GO:0004252">
    <property type="term" value="F:serine-type endopeptidase activity"/>
    <property type="evidence" value="ECO:0007669"/>
    <property type="project" value="UniProtKB-UniRule"/>
</dbReference>
<dbReference type="GO" id="GO:0006515">
    <property type="term" value="P:protein quality control for misfolded or incompletely synthesized proteins"/>
    <property type="evidence" value="ECO:0007669"/>
    <property type="project" value="TreeGrafter"/>
</dbReference>
<dbReference type="CDD" id="cd07017">
    <property type="entry name" value="S14_ClpP_2"/>
    <property type="match status" value="1"/>
</dbReference>
<dbReference type="FunFam" id="3.90.226.10:FF:000001">
    <property type="entry name" value="ATP-dependent Clp protease proteolytic subunit"/>
    <property type="match status" value="1"/>
</dbReference>
<dbReference type="Gene3D" id="3.90.226.10">
    <property type="entry name" value="2-enoyl-CoA Hydratase, Chain A, domain 1"/>
    <property type="match status" value="1"/>
</dbReference>
<dbReference type="HAMAP" id="MF_00444">
    <property type="entry name" value="ClpP"/>
    <property type="match status" value="1"/>
</dbReference>
<dbReference type="InterPro" id="IPR001907">
    <property type="entry name" value="ClpP"/>
</dbReference>
<dbReference type="InterPro" id="IPR029045">
    <property type="entry name" value="ClpP/crotonase-like_dom_sf"/>
</dbReference>
<dbReference type="InterPro" id="IPR023562">
    <property type="entry name" value="ClpP/TepA"/>
</dbReference>
<dbReference type="InterPro" id="IPR033135">
    <property type="entry name" value="ClpP_His_AS"/>
</dbReference>
<dbReference type="InterPro" id="IPR018215">
    <property type="entry name" value="ClpP_Ser_AS"/>
</dbReference>
<dbReference type="NCBIfam" id="TIGR00493">
    <property type="entry name" value="clpP"/>
    <property type="match status" value="1"/>
</dbReference>
<dbReference type="NCBIfam" id="NF001368">
    <property type="entry name" value="PRK00277.1"/>
    <property type="match status" value="1"/>
</dbReference>
<dbReference type="NCBIfam" id="NF009205">
    <property type="entry name" value="PRK12553.1"/>
    <property type="match status" value="1"/>
</dbReference>
<dbReference type="PANTHER" id="PTHR10381">
    <property type="entry name" value="ATP-DEPENDENT CLP PROTEASE PROTEOLYTIC SUBUNIT"/>
    <property type="match status" value="1"/>
</dbReference>
<dbReference type="PANTHER" id="PTHR10381:SF70">
    <property type="entry name" value="ATP-DEPENDENT CLP PROTEASE PROTEOLYTIC SUBUNIT"/>
    <property type="match status" value="1"/>
</dbReference>
<dbReference type="Pfam" id="PF00574">
    <property type="entry name" value="CLP_protease"/>
    <property type="match status" value="1"/>
</dbReference>
<dbReference type="PRINTS" id="PR00127">
    <property type="entry name" value="CLPPROTEASEP"/>
</dbReference>
<dbReference type="SUPFAM" id="SSF52096">
    <property type="entry name" value="ClpP/crotonase"/>
    <property type="match status" value="1"/>
</dbReference>
<dbReference type="PROSITE" id="PS00382">
    <property type="entry name" value="CLP_PROTEASE_HIS"/>
    <property type="match status" value="1"/>
</dbReference>
<dbReference type="PROSITE" id="PS00381">
    <property type="entry name" value="CLP_PROTEASE_SER"/>
    <property type="match status" value="1"/>
</dbReference>
<proteinExistence type="inferred from homology"/>
<comment type="function">
    <text evidence="1">Cleaves peptides in various proteins in a process that requires ATP hydrolysis. Has a chymotrypsin-like activity. Plays a major role in the degradation of misfolded proteins.</text>
</comment>
<comment type="catalytic activity">
    <reaction evidence="1">
        <text>Hydrolysis of proteins to small peptides in the presence of ATP and magnesium. alpha-casein is the usual test substrate. In the absence of ATP, only oligopeptides shorter than five residues are hydrolyzed (such as succinyl-Leu-Tyr-|-NHMec, and Leu-Tyr-Leu-|-Tyr-Trp, in which cleavage of the -Tyr-|-Leu- and -Tyr-|-Trp bonds also occurs).</text>
        <dbReference type="EC" id="3.4.21.92"/>
    </reaction>
</comment>
<comment type="subunit">
    <text evidence="1">Fourteen ClpP subunits assemble into 2 heptameric rings which stack back to back to give a disk-like structure with a central cavity, resembling the structure of eukaryotic proteasomes.</text>
</comment>
<comment type="subcellular location">
    <subcellularLocation>
        <location evidence="1">Cytoplasm</location>
    </subcellularLocation>
</comment>
<comment type="similarity">
    <text evidence="1">Belongs to the peptidase S14 family.</text>
</comment>
<organism>
    <name type="scientific">Syntrophus aciditrophicus (strain SB)</name>
    <dbReference type="NCBI Taxonomy" id="56780"/>
    <lineage>
        <taxon>Bacteria</taxon>
        <taxon>Pseudomonadati</taxon>
        <taxon>Thermodesulfobacteriota</taxon>
        <taxon>Syntrophia</taxon>
        <taxon>Syntrophales</taxon>
        <taxon>Syntrophaceae</taxon>
        <taxon>Syntrophus</taxon>
    </lineage>
</organism>
<name>CLPP_SYNAS</name>
<evidence type="ECO:0000255" key="1">
    <source>
        <dbReference type="HAMAP-Rule" id="MF_00444"/>
    </source>
</evidence>
<sequence length="194" mass="21709">MNLIPMVVQQDGRGERAYDIYSRLLKDRIIFLGTPIDDEVANLIIAQLLFLESEDPDKEIFFYLNTPGGHISSGMAIYDTMRYIKPPVATVCVGQAASMGALLLAAGEQGKRSALPHSRILIHQPLGGFQGQATDIDIQAREILRLKDELSLILADLTNQPLDRIKTDTERDYYMTSQQAKEYGIIDEIIVKRS</sequence>